<proteinExistence type="inferred from homology"/>
<gene>
    <name type="ordered locus">SE_1246</name>
</gene>
<accession>Q8CSD9</accession>
<dbReference type="EMBL" id="AE015929">
    <property type="protein sequence ID" value="AAO04845.1"/>
    <property type="molecule type" value="Genomic_DNA"/>
</dbReference>
<dbReference type="RefSeq" id="NP_764801.1">
    <property type="nucleotide sequence ID" value="NC_004461.1"/>
</dbReference>
<dbReference type="RefSeq" id="WP_002485076.1">
    <property type="nucleotide sequence ID" value="NC_004461.1"/>
</dbReference>
<dbReference type="SMR" id="Q8CSD9"/>
<dbReference type="KEGG" id="sep:SE_1246"/>
<dbReference type="PATRIC" id="fig|176280.10.peg.1214"/>
<dbReference type="eggNOG" id="COG0327">
    <property type="taxonomic scope" value="Bacteria"/>
</dbReference>
<dbReference type="HOGENOM" id="CLU_037423_1_0_9"/>
<dbReference type="OrthoDB" id="9792792at2"/>
<dbReference type="Proteomes" id="UP000001411">
    <property type="component" value="Chromosome"/>
</dbReference>
<dbReference type="GO" id="GO:0005737">
    <property type="term" value="C:cytoplasm"/>
    <property type="evidence" value="ECO:0007669"/>
    <property type="project" value="TreeGrafter"/>
</dbReference>
<dbReference type="GO" id="GO:0046872">
    <property type="term" value="F:metal ion binding"/>
    <property type="evidence" value="ECO:0007669"/>
    <property type="project" value="UniProtKB-KW"/>
</dbReference>
<dbReference type="FunFam" id="3.40.1390.30:FF:000001">
    <property type="entry name" value="GTP cyclohydrolase 1 type 2"/>
    <property type="match status" value="1"/>
</dbReference>
<dbReference type="Gene3D" id="3.30.70.120">
    <property type="match status" value="1"/>
</dbReference>
<dbReference type="Gene3D" id="3.40.1390.30">
    <property type="entry name" value="NIF3 (NGG1p interacting factor 3)-like"/>
    <property type="match status" value="1"/>
</dbReference>
<dbReference type="InterPro" id="IPR002678">
    <property type="entry name" value="DUF34/NIF3"/>
</dbReference>
<dbReference type="InterPro" id="IPR017221">
    <property type="entry name" value="DUF34/NIF3_bac"/>
</dbReference>
<dbReference type="InterPro" id="IPR036069">
    <property type="entry name" value="DUF34/NIF3_sf"/>
</dbReference>
<dbReference type="InterPro" id="IPR015867">
    <property type="entry name" value="N-reg_PII/ATP_PRibTrfase_C"/>
</dbReference>
<dbReference type="NCBIfam" id="TIGR00486">
    <property type="entry name" value="YbgI_SA1388"/>
    <property type="match status" value="1"/>
</dbReference>
<dbReference type="PANTHER" id="PTHR13799:SF14">
    <property type="entry name" value="GTP CYCLOHYDROLASE 1 TYPE 2 HOMOLOG"/>
    <property type="match status" value="1"/>
</dbReference>
<dbReference type="PANTHER" id="PTHR13799">
    <property type="entry name" value="NGG1 INTERACTING FACTOR 3"/>
    <property type="match status" value="1"/>
</dbReference>
<dbReference type="Pfam" id="PF01784">
    <property type="entry name" value="DUF34_NIF3"/>
    <property type="match status" value="1"/>
</dbReference>
<dbReference type="PIRSF" id="PIRSF037489">
    <property type="entry name" value="UCP037489_NIF3_YqfO"/>
    <property type="match status" value="1"/>
</dbReference>
<dbReference type="SUPFAM" id="SSF102705">
    <property type="entry name" value="NIF3 (NGG1p interacting factor 3)-like"/>
    <property type="match status" value="1"/>
</dbReference>
<evidence type="ECO:0000250" key="1">
    <source>
        <dbReference type="UniProtKB" id="P67272"/>
    </source>
</evidence>
<evidence type="ECO:0000305" key="2"/>
<comment type="subunit">
    <text evidence="1">Homohexamer.</text>
</comment>
<comment type="similarity">
    <text evidence="2">Belongs to the GTP cyclohydrolase I type 2/NIF3 family.</text>
</comment>
<organism>
    <name type="scientific">Staphylococcus epidermidis (strain ATCC 12228 / FDA PCI 1200)</name>
    <dbReference type="NCBI Taxonomy" id="176280"/>
    <lineage>
        <taxon>Bacteria</taxon>
        <taxon>Bacillati</taxon>
        <taxon>Bacillota</taxon>
        <taxon>Bacilli</taxon>
        <taxon>Bacillales</taxon>
        <taxon>Staphylococcaceae</taxon>
        <taxon>Staphylococcus</taxon>
    </lineage>
</organism>
<feature type="chain" id="PRO_0000147333" description="GTP cyclohydrolase 1 type 2 homolog">
    <location>
        <begin position="1"/>
        <end position="366"/>
    </location>
</feature>
<feature type="binding site" evidence="1">
    <location>
        <position position="64"/>
    </location>
    <ligand>
        <name>a divalent metal cation</name>
        <dbReference type="ChEBI" id="CHEBI:60240"/>
        <label>1</label>
    </ligand>
</feature>
<feature type="binding site" evidence="1">
    <location>
        <position position="65"/>
    </location>
    <ligand>
        <name>a divalent metal cation</name>
        <dbReference type="ChEBI" id="CHEBI:60240"/>
        <label>2</label>
    </ligand>
</feature>
<feature type="binding site" evidence="1">
    <location>
        <position position="102"/>
    </location>
    <ligand>
        <name>a divalent metal cation</name>
        <dbReference type="ChEBI" id="CHEBI:60240"/>
        <label>1</label>
    </ligand>
</feature>
<feature type="binding site" evidence="1">
    <location>
        <position position="326"/>
    </location>
    <ligand>
        <name>a divalent metal cation</name>
        <dbReference type="ChEBI" id="CHEBI:60240"/>
        <label>2</label>
    </ligand>
</feature>
<feature type="binding site" evidence="1">
    <location>
        <position position="329"/>
    </location>
    <ligand>
        <name>a divalent metal cation</name>
        <dbReference type="ChEBI" id="CHEBI:60240"/>
        <label>1</label>
    </ligand>
</feature>
<feature type="binding site" evidence="1">
    <location>
        <position position="329"/>
    </location>
    <ligand>
        <name>a divalent metal cation</name>
        <dbReference type="ChEBI" id="CHEBI:60240"/>
        <label>2</label>
    </ligand>
</feature>
<reference key="1">
    <citation type="journal article" date="2003" name="Mol. Microbiol.">
        <title>Genome-based analysis of virulence genes in a non-biofilm-forming Staphylococcus epidermidis strain (ATCC 12228).</title>
        <authorList>
            <person name="Zhang Y.-Q."/>
            <person name="Ren S.-X."/>
            <person name="Li H.-L."/>
            <person name="Wang Y.-X."/>
            <person name="Fu G."/>
            <person name="Yang J."/>
            <person name="Qin Z.-Q."/>
            <person name="Miao Y.-G."/>
            <person name="Wang W.-Y."/>
            <person name="Chen R.-S."/>
            <person name="Shen Y."/>
            <person name="Chen Z."/>
            <person name="Yuan Z.-H."/>
            <person name="Zhao G.-P."/>
            <person name="Qu D."/>
            <person name="Danchin A."/>
            <person name="Wen Y.-M."/>
        </authorList>
    </citation>
    <scope>NUCLEOTIDE SEQUENCE [LARGE SCALE GENOMIC DNA]</scope>
    <source>
        <strain>ATCC 12228 / FDA PCI 1200</strain>
    </source>
</reference>
<protein>
    <recommendedName>
        <fullName>GTP cyclohydrolase 1 type 2 homolog</fullName>
    </recommendedName>
</protein>
<keyword id="KW-0479">Metal-binding</keyword>
<name>GCH1L_STAES</name>
<sequence>MKISELMEVLNNHVPFHQAESWDNVGLLIGNDKLDITGILTTLDCTDDVVNQAIELNTNTIIAHHPLIFKGVKRIVEDGYGSIIRKLIQNNINLIALHTNLDVNPKGVNRMLADQIGLENISMINTNSSYYYKVQTFIPKNYIEDFKDSLNELGLAKEGNYEYCFFESEGKGQFKPVGDASPYIGKLDSIEYVDEIKLEFMIKGNELEITKRAILDNHPYETPVFDFIKMNKESEYGLGIIGQLNQTMTLDEFSEYAKKQLNIPSVRYTGQHDSPIKKVAIIGGSGIGFEYKASQLGADVFVTGDIKHHDALDAKIQNVNLLDINHYSEYVMKEGLKELLEKWLFKYENQFPIYASEINTDPFKYK</sequence>